<sequence>MSNPPQGSSLASPIQAAAVTGDKTTLLRLIASSPQVIDQEDQLGRTPLMYSVLGDRRSCAEALLKHGAKVNRPDRSGRTALHLAAQTGNHRLLKLLLSRKADCTHRDLCDITALHLSTRHQDTQCLVLLLKYTPPGQVDAQDQRKQTALHWSAYYNRPQHVRLLVRHGSNIGIPDTEGKIPLHWAAGHKDPEAALTVRCLFEAAPTESLLNWQDYEGRTPLHLAVGDGNQEVVRLLTSYRGCNVAPYDNLFRTPLHWAALLGHTPIAHLLLERNNSPNIPSDSQGATPLHYAAQGNCPDTVRVLLSHPSVRDEADLEGRTALMWAAGKGSDEVVRTMLELNPKLEVNRTDKYGGTALHAASLSGQITTVRILLENRAQADAVDVMKHTPLFRACEMGHREVIATLIKGGAKVHLVDKDGRSPLHWAALGGNANVCQILIENNINPDAQDYEGRTPLQCAAYGGYIGCMEVLMENKADPNIQDKNGRTALHWSCNNGYLDAVKLLLGYNAFPNQMENTEERYTPLDYALLGGHQEVIQFMLEHGALSIAAIQDIAAFKIQAVYKGHKVRRAFQERKNLLMKHEQLRKGAAAKKREGENRQKVKVGQTKGKQKDADSMERQNKSNEQIIKNEVVHEWQGEASGNAEDRKGKHREENLETNHLQHSKHMAKNQRITAQIQSSPSEHEHTNSIQIRTSPSGTSNTQSSPLGNEIPKNMYWDDNPSQKHTQTRRTSRHQMESPDVVVHRIEDLIQKESRRKSHREERKGSHRQRQSSDYRLHTSEKEASDSAIHREEEGKKKETKKGRRTVAVTPKIEACCKGGCGKLSQSEKVSLGIGIQGRVDCITSPEPCETPSRVCRERKTISAKTGQRPLTETHKPPGKACRSSSALKSSLPSHIKQTAIDSKCLDSTLSYIGFGEAIKPLFPMGILREGSFFSKWQNIDIELIPVQARLQLVEREKARKQLFQRKNHAATVIQKAWRTYWVRKSSCKTRHSRSQNNPPAMV</sequence>
<evidence type="ECO:0000250" key="1"/>
<evidence type="ECO:0000255" key="2">
    <source>
        <dbReference type="PROSITE-ProRule" id="PRU00116"/>
    </source>
</evidence>
<evidence type="ECO:0000256" key="3">
    <source>
        <dbReference type="SAM" id="MobiDB-lite"/>
    </source>
</evidence>
<evidence type="ECO:0000269" key="4">
    <source ref="1"/>
</evidence>
<dbReference type="EMBL" id="AF321229">
    <property type="protein sequence ID" value="AAQ14848.1"/>
    <property type="molecule type" value="mRNA"/>
</dbReference>
<dbReference type="RefSeq" id="NP_001083066.1">
    <property type="nucleotide sequence ID" value="NM_001089597.1"/>
</dbReference>
<dbReference type="SMR" id="Q71S21"/>
<dbReference type="GeneID" id="398717"/>
<dbReference type="KEGG" id="xla:398717"/>
<dbReference type="AGR" id="Xenbase:XB-GENE-6255451"/>
<dbReference type="CTD" id="398717"/>
<dbReference type="Xenbase" id="XB-GENE-6255451">
    <property type="gene designation" value="invs.L"/>
</dbReference>
<dbReference type="OrthoDB" id="20872at2759"/>
<dbReference type="Proteomes" id="UP000186698">
    <property type="component" value="Chromosome 8L"/>
</dbReference>
<dbReference type="Bgee" id="398717">
    <property type="expression patterns" value="Expressed in blastula and 13 other cell types or tissues"/>
</dbReference>
<dbReference type="GO" id="GO:0005737">
    <property type="term" value="C:cytoplasm"/>
    <property type="evidence" value="ECO:0007669"/>
    <property type="project" value="UniProtKB-SubCell"/>
</dbReference>
<dbReference type="GO" id="GO:0005856">
    <property type="term" value="C:cytoskeleton"/>
    <property type="evidence" value="ECO:0007669"/>
    <property type="project" value="UniProtKB-SubCell"/>
</dbReference>
<dbReference type="GO" id="GO:0005516">
    <property type="term" value="F:calmodulin binding"/>
    <property type="evidence" value="ECO:0007669"/>
    <property type="project" value="UniProtKB-KW"/>
</dbReference>
<dbReference type="GO" id="GO:0035777">
    <property type="term" value="P:pronephric distal tubule development"/>
    <property type="evidence" value="ECO:0000315"/>
    <property type="project" value="Xenbase"/>
</dbReference>
<dbReference type="GO" id="GO:0035776">
    <property type="term" value="P:pronephric proximal tubule development"/>
    <property type="evidence" value="ECO:0000315"/>
    <property type="project" value="Xenbase"/>
</dbReference>
<dbReference type="GO" id="GO:0016055">
    <property type="term" value="P:Wnt signaling pathway"/>
    <property type="evidence" value="ECO:0007669"/>
    <property type="project" value="UniProtKB-KW"/>
</dbReference>
<dbReference type="CDD" id="cd23767">
    <property type="entry name" value="IQCD"/>
    <property type="match status" value="2"/>
</dbReference>
<dbReference type="Gene3D" id="1.20.5.190">
    <property type="match status" value="1"/>
</dbReference>
<dbReference type="Gene3D" id="1.25.40.20">
    <property type="entry name" value="Ankyrin repeat-containing domain"/>
    <property type="match status" value="4"/>
</dbReference>
<dbReference type="InterPro" id="IPR002110">
    <property type="entry name" value="Ankyrin_rpt"/>
</dbReference>
<dbReference type="InterPro" id="IPR036770">
    <property type="entry name" value="Ankyrin_rpt-contain_sf"/>
</dbReference>
<dbReference type="InterPro" id="IPR000048">
    <property type="entry name" value="IQ_motif_EF-hand-BS"/>
</dbReference>
<dbReference type="PANTHER" id="PTHR24161">
    <property type="entry name" value="ANK_REP_REGION DOMAIN-CONTAINING PROTEIN-RELATED"/>
    <property type="match status" value="1"/>
</dbReference>
<dbReference type="PANTHER" id="PTHR24161:SF124">
    <property type="entry name" value="TRANSIENT RECEPTOR POTENTIAL CHANNEL PYREXIA"/>
    <property type="match status" value="1"/>
</dbReference>
<dbReference type="Pfam" id="PF00023">
    <property type="entry name" value="Ank"/>
    <property type="match status" value="3"/>
</dbReference>
<dbReference type="Pfam" id="PF12796">
    <property type="entry name" value="Ank_2"/>
    <property type="match status" value="4"/>
</dbReference>
<dbReference type="Pfam" id="PF00612">
    <property type="entry name" value="IQ"/>
    <property type="match status" value="2"/>
</dbReference>
<dbReference type="SMART" id="SM00248">
    <property type="entry name" value="ANK"/>
    <property type="match status" value="16"/>
</dbReference>
<dbReference type="SMART" id="SM00015">
    <property type="entry name" value="IQ"/>
    <property type="match status" value="2"/>
</dbReference>
<dbReference type="SUPFAM" id="SSF48403">
    <property type="entry name" value="Ankyrin repeat"/>
    <property type="match status" value="2"/>
</dbReference>
<dbReference type="PROSITE" id="PS50297">
    <property type="entry name" value="ANK_REP_REGION"/>
    <property type="match status" value="1"/>
</dbReference>
<dbReference type="PROSITE" id="PS50088">
    <property type="entry name" value="ANK_REPEAT"/>
    <property type="match status" value="13"/>
</dbReference>
<dbReference type="PROSITE" id="PS50096">
    <property type="entry name" value="IQ"/>
    <property type="match status" value="2"/>
</dbReference>
<accession>Q71S21</accession>
<reference key="1">
    <citation type="submission" date="2000-11" db="EMBL/GenBank/DDBJ databases">
        <title>The inv RNA randomizes left-right asymmetry in Xenopus embryos through binding to calmodulin.</title>
        <authorList>
            <person name="Yasuhiko Y."/>
            <person name="Shiokawa K."/>
            <person name="Yokoyama T."/>
        </authorList>
    </citation>
    <scope>NUCLEOTIDE SEQUENCE [MRNA]</scope>
    <scope>INTERACTION WITH CALMODULIN</scope>
</reference>
<name>INVSB_XENLA</name>
<feature type="chain" id="PRO_0000067021" description="Inversin-B">
    <location>
        <begin position="1"/>
        <end position="1002"/>
    </location>
</feature>
<feature type="repeat" description="ANK 1">
    <location>
        <begin position="9"/>
        <end position="39"/>
    </location>
</feature>
<feature type="repeat" description="ANK 2">
    <location>
        <begin position="43"/>
        <end position="72"/>
    </location>
</feature>
<feature type="repeat" description="ANK 3">
    <location>
        <begin position="76"/>
        <end position="105"/>
    </location>
</feature>
<feature type="repeat" description="ANK 4">
    <location>
        <begin position="109"/>
        <end position="140"/>
    </location>
</feature>
<feature type="repeat" description="ANK 5">
    <location>
        <begin position="144"/>
        <end position="173"/>
    </location>
</feature>
<feature type="repeat" description="ANK 6">
    <location>
        <begin position="177"/>
        <end position="209"/>
    </location>
</feature>
<feature type="repeat" description="ANK 7">
    <location>
        <begin position="216"/>
        <end position="246"/>
    </location>
</feature>
<feature type="repeat" description="ANK 8">
    <location>
        <begin position="250"/>
        <end position="279"/>
    </location>
</feature>
<feature type="repeat" description="ANK 9">
    <location>
        <begin position="284"/>
        <end position="313"/>
    </location>
</feature>
<feature type="repeat" description="ANK 10">
    <location>
        <begin position="317"/>
        <end position="346"/>
    </location>
</feature>
<feature type="repeat" description="ANK 11">
    <location>
        <begin position="352"/>
        <end position="381"/>
    </location>
</feature>
<feature type="repeat" description="ANK 12">
    <location>
        <begin position="385"/>
        <end position="414"/>
    </location>
</feature>
<feature type="repeat" description="ANK 13">
    <location>
        <begin position="418"/>
        <end position="447"/>
    </location>
</feature>
<feature type="repeat" description="ANK 14">
    <location>
        <begin position="451"/>
        <end position="480"/>
    </location>
</feature>
<feature type="repeat" description="ANK 15">
    <location>
        <begin position="484"/>
        <end position="513"/>
    </location>
</feature>
<feature type="repeat" description="ANK 16">
    <location>
        <begin position="519"/>
        <end position="549"/>
    </location>
</feature>
<feature type="domain" description="IQ 1" evidence="2">
    <location>
        <begin position="551"/>
        <end position="580"/>
    </location>
</feature>
<feature type="domain" description="IQ 2" evidence="2">
    <location>
        <begin position="966"/>
        <end position="995"/>
    </location>
</feature>
<feature type="region of interest" description="Disordered" evidence="3">
    <location>
        <begin position="586"/>
        <end position="804"/>
    </location>
</feature>
<feature type="region of interest" description="Disordered" evidence="3">
    <location>
        <begin position="862"/>
        <end position="886"/>
    </location>
</feature>
<feature type="short sequence motif" description="D-box 1">
    <location>
        <begin position="486"/>
        <end position="494"/>
    </location>
</feature>
<feature type="short sequence motif" description="D-box 2">
    <location>
        <begin position="959"/>
        <end position="967"/>
    </location>
</feature>
<feature type="compositionally biased region" description="Basic and acidic residues" evidence="3">
    <location>
        <begin position="586"/>
        <end position="599"/>
    </location>
</feature>
<feature type="compositionally biased region" description="Basic and acidic residues" evidence="3">
    <location>
        <begin position="609"/>
        <end position="621"/>
    </location>
</feature>
<feature type="compositionally biased region" description="Basic and acidic residues" evidence="3">
    <location>
        <begin position="643"/>
        <end position="656"/>
    </location>
</feature>
<feature type="compositionally biased region" description="Polar residues" evidence="3">
    <location>
        <begin position="670"/>
        <end position="680"/>
    </location>
</feature>
<feature type="compositionally biased region" description="Polar residues" evidence="3">
    <location>
        <begin position="687"/>
        <end position="706"/>
    </location>
</feature>
<feature type="compositionally biased region" description="Basic and acidic residues" evidence="3">
    <location>
        <begin position="733"/>
        <end position="763"/>
    </location>
</feature>
<feature type="compositionally biased region" description="Basic and acidic residues" evidence="3">
    <location>
        <begin position="770"/>
        <end position="796"/>
    </location>
</feature>
<keyword id="KW-0040">ANK repeat</keyword>
<keyword id="KW-0112">Calmodulin-binding</keyword>
<keyword id="KW-0963">Cytoplasm</keyword>
<keyword id="KW-0206">Cytoskeleton</keyword>
<keyword id="KW-0217">Developmental protein</keyword>
<keyword id="KW-1185">Reference proteome</keyword>
<keyword id="KW-0677">Repeat</keyword>
<keyword id="KW-0879">Wnt signaling pathway</keyword>
<proteinExistence type="evidence at protein level"/>
<comment type="function">
    <text evidence="1">Required for normal renal development and establishment of left-right axis. Probably acts as a molecular switch between different Wnt signaling pathways. Inhibits the canonical Wnt pathway by targeting cytoplasmic disheveled for degradation by the ubiquitin-proteasome. This suggests that it is required in renal development to oppose the repression of terminal differentiation of tubular epithelial cells by Wnt signaling. Plays a central role in convergent extension movements in gastrulating embryos, a processus regulated by Wnt signaling (By similarity).</text>
</comment>
<comment type="subunit">
    <text evidence="1 4">Interacts with apc2 (By similarity). Binds calmodulin.</text>
</comment>
<comment type="subcellular location">
    <subcellularLocation>
        <location evidence="1">Cytoplasm</location>
    </subcellularLocation>
    <subcellularLocation>
        <location evidence="1">Cytoplasm</location>
        <location evidence="1">Cytoskeleton</location>
    </subcellularLocation>
    <text evidence="1">Associates with the cytoskeleton.</text>
</comment>
<comment type="domain">
    <text evidence="1">The D-box (destruction box) mediate the interaction with APC proteins, and may act as a recognition signal for degradation via the ubiquitin-proteasome pathway.</text>
</comment>
<gene>
    <name type="primary">invs-b</name>
    <name type="synonym">inv2</name>
    <name type="synonym">invs-2</name>
</gene>
<organism>
    <name type="scientific">Xenopus laevis</name>
    <name type="common">African clawed frog</name>
    <dbReference type="NCBI Taxonomy" id="8355"/>
    <lineage>
        <taxon>Eukaryota</taxon>
        <taxon>Metazoa</taxon>
        <taxon>Chordata</taxon>
        <taxon>Craniata</taxon>
        <taxon>Vertebrata</taxon>
        <taxon>Euteleostomi</taxon>
        <taxon>Amphibia</taxon>
        <taxon>Batrachia</taxon>
        <taxon>Anura</taxon>
        <taxon>Pipoidea</taxon>
        <taxon>Pipidae</taxon>
        <taxon>Xenopodinae</taxon>
        <taxon>Xenopus</taxon>
        <taxon>Xenopus</taxon>
    </lineage>
</organism>
<protein>
    <recommendedName>
        <fullName>Inversin-B</fullName>
    </recommendedName>
</protein>